<name>APAG_SHEDO</name>
<reference key="1">
    <citation type="submission" date="2006-03" db="EMBL/GenBank/DDBJ databases">
        <title>Complete sequence of Shewanella denitrificans OS217.</title>
        <authorList>
            <consortium name="US DOE Joint Genome Institute"/>
            <person name="Copeland A."/>
            <person name="Lucas S."/>
            <person name="Lapidus A."/>
            <person name="Barry K."/>
            <person name="Detter J.C."/>
            <person name="Glavina del Rio T."/>
            <person name="Hammon N."/>
            <person name="Israni S."/>
            <person name="Dalin E."/>
            <person name="Tice H."/>
            <person name="Pitluck S."/>
            <person name="Brettin T."/>
            <person name="Bruce D."/>
            <person name="Han C."/>
            <person name="Tapia R."/>
            <person name="Gilna P."/>
            <person name="Kiss H."/>
            <person name="Schmutz J."/>
            <person name="Larimer F."/>
            <person name="Land M."/>
            <person name="Hauser L."/>
            <person name="Kyrpides N."/>
            <person name="Lykidis A."/>
            <person name="Richardson P."/>
        </authorList>
    </citation>
    <scope>NUCLEOTIDE SEQUENCE [LARGE SCALE GENOMIC DNA]</scope>
    <source>
        <strain>OS217 / ATCC BAA-1090 / DSM 15013</strain>
    </source>
</reference>
<accession>Q12K58</accession>
<evidence type="ECO:0000255" key="1">
    <source>
        <dbReference type="HAMAP-Rule" id="MF_00791"/>
    </source>
</evidence>
<feature type="chain" id="PRO_1000083648" description="Protein ApaG">
    <location>
        <begin position="1"/>
        <end position="126"/>
    </location>
</feature>
<feature type="domain" description="ApaG" evidence="1">
    <location>
        <begin position="2"/>
        <end position="126"/>
    </location>
</feature>
<organism>
    <name type="scientific">Shewanella denitrificans (strain OS217 / ATCC BAA-1090 / DSM 15013)</name>
    <dbReference type="NCBI Taxonomy" id="318161"/>
    <lineage>
        <taxon>Bacteria</taxon>
        <taxon>Pseudomonadati</taxon>
        <taxon>Pseudomonadota</taxon>
        <taxon>Gammaproteobacteria</taxon>
        <taxon>Alteromonadales</taxon>
        <taxon>Shewanellaceae</taxon>
        <taxon>Shewanella</taxon>
    </lineage>
</organism>
<gene>
    <name evidence="1" type="primary">apaG</name>
    <name type="ordered locus">Sden_2889</name>
</gene>
<dbReference type="EMBL" id="CP000302">
    <property type="protein sequence ID" value="ABE56168.1"/>
    <property type="molecule type" value="Genomic_DNA"/>
</dbReference>
<dbReference type="RefSeq" id="WP_011497317.1">
    <property type="nucleotide sequence ID" value="NC_007954.1"/>
</dbReference>
<dbReference type="SMR" id="Q12K58"/>
<dbReference type="STRING" id="318161.Sden_2889"/>
<dbReference type="KEGG" id="sdn:Sden_2889"/>
<dbReference type="eggNOG" id="COG2967">
    <property type="taxonomic scope" value="Bacteria"/>
</dbReference>
<dbReference type="HOGENOM" id="CLU_128074_0_0_6"/>
<dbReference type="OrthoDB" id="9795226at2"/>
<dbReference type="Proteomes" id="UP000001982">
    <property type="component" value="Chromosome"/>
</dbReference>
<dbReference type="GO" id="GO:0070987">
    <property type="term" value="P:error-free translesion synthesis"/>
    <property type="evidence" value="ECO:0007669"/>
    <property type="project" value="TreeGrafter"/>
</dbReference>
<dbReference type="Gene3D" id="2.60.40.1470">
    <property type="entry name" value="ApaG domain"/>
    <property type="match status" value="1"/>
</dbReference>
<dbReference type="HAMAP" id="MF_00791">
    <property type="entry name" value="ApaG"/>
    <property type="match status" value="1"/>
</dbReference>
<dbReference type="InterPro" id="IPR007474">
    <property type="entry name" value="ApaG_domain"/>
</dbReference>
<dbReference type="InterPro" id="IPR036767">
    <property type="entry name" value="ApaG_sf"/>
</dbReference>
<dbReference type="InterPro" id="IPR023065">
    <property type="entry name" value="Uncharacterised_ApaG"/>
</dbReference>
<dbReference type="NCBIfam" id="NF003967">
    <property type="entry name" value="PRK05461.1"/>
    <property type="match status" value="1"/>
</dbReference>
<dbReference type="PANTHER" id="PTHR14289">
    <property type="entry name" value="F-BOX ONLY PROTEIN 3"/>
    <property type="match status" value="1"/>
</dbReference>
<dbReference type="PANTHER" id="PTHR14289:SF16">
    <property type="entry name" value="POLYMERASE DELTA-INTERACTING PROTEIN 2"/>
    <property type="match status" value="1"/>
</dbReference>
<dbReference type="Pfam" id="PF04379">
    <property type="entry name" value="DUF525"/>
    <property type="match status" value="1"/>
</dbReference>
<dbReference type="SUPFAM" id="SSF110069">
    <property type="entry name" value="ApaG-like"/>
    <property type="match status" value="1"/>
</dbReference>
<dbReference type="PROSITE" id="PS51087">
    <property type="entry name" value="APAG"/>
    <property type="match status" value="1"/>
</dbReference>
<proteinExistence type="inferred from homology"/>
<sequence length="126" mass="13767">MSFPIDSIKIKVESHFLAQQSSLLEGKYVFSYTVTIVNLSDINVTLKSRHWIITDANGAESQVKGPGVVGETPTIAPNNAYQYTSGTVFETPVGFMHGRYTMESGLGETFEASIPSFRLAMPGVMQ</sequence>
<keyword id="KW-1185">Reference proteome</keyword>
<protein>
    <recommendedName>
        <fullName evidence="1">Protein ApaG</fullName>
    </recommendedName>
</protein>